<keyword id="KW-0249">Electron transport</keyword>
<keyword id="KW-0274">FAD</keyword>
<keyword id="KW-0285">Flavoprotein</keyword>
<keyword id="KW-0472">Membrane</keyword>
<keyword id="KW-0496">Mitochondrion</keyword>
<keyword id="KW-0999">Mitochondrion inner membrane</keyword>
<keyword id="KW-0560">Oxidoreductase</keyword>
<keyword id="KW-1185">Reference proteome</keyword>
<keyword id="KW-0809">Transit peptide</keyword>
<keyword id="KW-0813">Transport</keyword>
<keyword id="KW-0816">Tricarboxylic acid cycle</keyword>
<proteinExistence type="evidence at transcript level"/>
<comment type="function">
    <text evidence="1 2">Flavoprotein (FP) subunit of succinate dehydrogenase (SDH) that is involved in complex II of the mitochondrial electron transport chain and is responsible for transferring electrons from succinate to ubiquinone (coenzyme Q) (By similarity). SDH also oxidizes malate to the non-canonical enol form of oxaloacetate, enol-oxaloacetate. Enol-oxaloacetate, which is a potent inhibitor of the succinate dehydrogenase activity, is further isomerized into keto-oxaloacetate (By similarity).</text>
</comment>
<comment type="catalytic activity">
    <reaction evidence="2">
        <text>a ubiquinone + succinate = a ubiquinol + fumarate</text>
        <dbReference type="Rhea" id="RHEA:13713"/>
        <dbReference type="Rhea" id="RHEA-COMP:9565"/>
        <dbReference type="Rhea" id="RHEA-COMP:9566"/>
        <dbReference type="ChEBI" id="CHEBI:16389"/>
        <dbReference type="ChEBI" id="CHEBI:17976"/>
        <dbReference type="ChEBI" id="CHEBI:29806"/>
        <dbReference type="ChEBI" id="CHEBI:30031"/>
        <dbReference type="EC" id="1.3.5.1"/>
    </reaction>
</comment>
<comment type="catalytic activity">
    <reaction evidence="1">
        <text>(R)-malate + a quinone = enol-oxaloacetate + a quinol</text>
        <dbReference type="Rhea" id="RHEA:79827"/>
        <dbReference type="ChEBI" id="CHEBI:15588"/>
        <dbReference type="ChEBI" id="CHEBI:17479"/>
        <dbReference type="ChEBI" id="CHEBI:24646"/>
        <dbReference type="ChEBI" id="CHEBI:132124"/>
    </reaction>
    <physiologicalReaction direction="left-to-right" evidence="1">
        <dbReference type="Rhea" id="RHEA:79828"/>
    </physiologicalReaction>
</comment>
<comment type="catalytic activity">
    <reaction evidence="1">
        <text>(S)-malate + a quinone = enol-oxaloacetate + a quinol</text>
        <dbReference type="Rhea" id="RHEA:79831"/>
        <dbReference type="ChEBI" id="CHEBI:15589"/>
        <dbReference type="ChEBI" id="CHEBI:17479"/>
        <dbReference type="ChEBI" id="CHEBI:24646"/>
        <dbReference type="ChEBI" id="CHEBI:132124"/>
    </reaction>
    <physiologicalReaction direction="left-to-right" evidence="1">
        <dbReference type="Rhea" id="RHEA:79832"/>
    </physiologicalReaction>
</comment>
<comment type="cofactor">
    <cofactor evidence="3">
        <name>FAD</name>
        <dbReference type="ChEBI" id="CHEBI:57692"/>
    </cofactor>
</comment>
<comment type="activity regulation">
    <text evidence="1">Enol-oxaloacetate inhibits the succinate dehydrogenase activity.</text>
</comment>
<comment type="pathway">
    <text evidence="2">Carbohydrate metabolism; tricarboxylic acid cycle; fumarate from succinate (eukaryal route): step 1/1.</text>
</comment>
<comment type="subunit">
    <text evidence="3">Component of complex II composed of four subunits: a flavoprotein (FP), an iron-sulfur protein (IP), and a cytochrome b composed of a large and a small subunit.</text>
</comment>
<comment type="subcellular location">
    <subcellularLocation>
        <location evidence="3">Mitochondrion inner membrane</location>
        <topology evidence="3">Peripheral membrane protein</topology>
        <orientation evidence="3">Matrix side</orientation>
    </subcellularLocation>
</comment>
<comment type="similarity">
    <text evidence="5">Belongs to the FAD-dependent oxidoreductase 2 family. FRD/SDH subfamily.</text>
</comment>
<protein>
    <recommendedName>
        <fullName>Succinate dehydrogenase [ubiquinone] flavoprotein subunit, mitochondrial</fullName>
        <ecNumber evidence="2">1.3.5.1</ecNumber>
    </recommendedName>
    <alternativeName>
        <fullName>Flavoprotein subunit of complex II</fullName>
        <shortName>Fp</shortName>
    </alternativeName>
    <alternativeName>
        <fullName>Malate dehydrogenase [quinone] flavoprotein subunit</fullName>
        <ecNumber evidence="1">1.1.5.-</ecNumber>
    </alternativeName>
</protein>
<feature type="transit peptide" description="Mitochondrion" evidence="3">
    <location>
        <begin position="1"/>
        <end position="45"/>
    </location>
</feature>
<feature type="chain" id="PRO_0000272307" description="Succinate dehydrogenase [ubiquinone] flavoprotein subunit, mitochondrial">
    <location>
        <begin position="46"/>
        <end position="665"/>
    </location>
</feature>
<feature type="active site" description="Proton acceptor" evidence="4">
    <location>
        <position position="343"/>
    </location>
</feature>
<feature type="binding site" evidence="2">
    <location>
        <position position="72"/>
    </location>
    <ligand>
        <name>FAD</name>
        <dbReference type="ChEBI" id="CHEBI:57692"/>
    </ligand>
</feature>
<feature type="binding site" evidence="2">
    <location>
        <position position="75"/>
    </location>
    <ligand>
        <name>FAD</name>
        <dbReference type="ChEBI" id="CHEBI:57692"/>
    </ligand>
</feature>
<feature type="binding site" evidence="2">
    <location>
        <position position="94"/>
    </location>
    <ligand>
        <name>FAD</name>
        <dbReference type="ChEBI" id="CHEBI:57692"/>
    </ligand>
</feature>
<feature type="binding site" evidence="2">
    <location>
        <position position="95"/>
    </location>
    <ligand>
        <name>FAD</name>
        <dbReference type="ChEBI" id="CHEBI:57692"/>
    </ligand>
</feature>
<feature type="binding site" evidence="2">
    <location>
        <position position="101"/>
    </location>
    <ligand>
        <name>FAD</name>
        <dbReference type="ChEBI" id="CHEBI:57692"/>
    </ligand>
</feature>
<feature type="binding site" evidence="2">
    <location>
        <position position="103"/>
    </location>
    <ligand>
        <name>FAD</name>
        <dbReference type="ChEBI" id="CHEBI:57692"/>
    </ligand>
</feature>
<feature type="binding site" evidence="2">
    <location>
        <position position="108"/>
    </location>
    <ligand>
        <name>FAD</name>
        <dbReference type="ChEBI" id="CHEBI:57692"/>
    </ligand>
</feature>
<feature type="binding site" evidence="2">
    <location>
        <position position="224"/>
    </location>
    <ligand>
        <name>FAD</name>
        <dbReference type="ChEBI" id="CHEBI:57692"/>
    </ligand>
</feature>
<feature type="binding site" evidence="2">
    <location>
        <position position="278"/>
    </location>
    <ligand>
        <name>FAD</name>
        <dbReference type="ChEBI" id="CHEBI:57692"/>
    </ligand>
</feature>
<feature type="binding site" evidence="2">
    <location>
        <position position="299"/>
    </location>
    <ligand>
        <name>oxaloacetate</name>
        <dbReference type="ChEBI" id="CHEBI:16452"/>
    </ligand>
</feature>
<feature type="binding site" evidence="2">
    <location>
        <position position="343"/>
    </location>
    <ligand>
        <name>oxaloacetate</name>
        <dbReference type="ChEBI" id="CHEBI:16452"/>
    </ligand>
</feature>
<feature type="binding site" evidence="2">
    <location>
        <position position="410"/>
    </location>
    <ligand>
        <name>oxaloacetate</name>
        <dbReference type="ChEBI" id="CHEBI:16452"/>
    </ligand>
</feature>
<feature type="binding site" evidence="2">
    <location>
        <position position="443"/>
    </location>
    <ligand>
        <name>FAD</name>
        <dbReference type="ChEBI" id="CHEBI:57692"/>
    </ligand>
</feature>
<feature type="binding site" evidence="2">
    <location>
        <position position="454"/>
    </location>
    <ligand>
        <name>oxaloacetate</name>
        <dbReference type="ChEBI" id="CHEBI:16452"/>
    </ligand>
</feature>
<feature type="binding site" evidence="2">
    <location>
        <position position="457"/>
    </location>
    <ligand>
        <name>oxaloacetate</name>
        <dbReference type="ChEBI" id="CHEBI:16452"/>
    </ligand>
</feature>
<feature type="binding site" evidence="2">
    <location>
        <position position="459"/>
    </location>
    <ligand>
        <name>FAD</name>
        <dbReference type="ChEBI" id="CHEBI:57692"/>
    </ligand>
</feature>
<feature type="binding site" evidence="2">
    <location>
        <position position="460"/>
    </location>
    <ligand>
        <name>FAD</name>
        <dbReference type="ChEBI" id="CHEBI:57692"/>
    </ligand>
</feature>
<feature type="modified residue" description="Tele-8alpha-FAD histidine" evidence="4">
    <location>
        <position position="102"/>
    </location>
</feature>
<gene>
    <name type="primary">sdha</name>
    <name type="ORF">TNeu107a09.1</name>
</gene>
<dbReference type="EC" id="1.3.5.1" evidence="2"/>
<dbReference type="EC" id="1.1.5.-" evidence="1"/>
<dbReference type="EMBL" id="CR848322">
    <property type="protein sequence ID" value="CAJ83256.1"/>
    <property type="molecule type" value="mRNA"/>
</dbReference>
<dbReference type="EMBL" id="BC135730">
    <property type="protein sequence ID" value="AAI35731.1"/>
    <property type="molecule type" value="mRNA"/>
</dbReference>
<dbReference type="RefSeq" id="NP_001015989.1">
    <property type="nucleotide sequence ID" value="NM_001015989.2"/>
</dbReference>
<dbReference type="SMR" id="Q28ED0"/>
<dbReference type="FunCoup" id="Q28ED0">
    <property type="interactions" value="1409"/>
</dbReference>
<dbReference type="STRING" id="8364.ENSXETP00000013809"/>
<dbReference type="PaxDb" id="8364-ENSXETP00000026401"/>
<dbReference type="DNASU" id="548743"/>
<dbReference type="GeneID" id="548743"/>
<dbReference type="KEGG" id="xtr:548743"/>
<dbReference type="AGR" id="Xenbase:XB-GENE-956942"/>
<dbReference type="CTD" id="6389"/>
<dbReference type="Xenbase" id="XB-GENE-956942">
    <property type="gene designation" value="sdha"/>
</dbReference>
<dbReference type="eggNOG" id="KOG2403">
    <property type="taxonomic scope" value="Eukaryota"/>
</dbReference>
<dbReference type="InParanoid" id="Q28ED0"/>
<dbReference type="OMA" id="PTGIWRM"/>
<dbReference type="OrthoDB" id="71672at2759"/>
<dbReference type="Reactome" id="R-XTR-71403">
    <property type="pathway name" value="Citric acid cycle (TCA cycle)"/>
</dbReference>
<dbReference type="Reactome" id="R-XTR-9854311">
    <property type="pathway name" value="Maturation of TCA enzymes and regulation of TCA cycle"/>
</dbReference>
<dbReference type="UniPathway" id="UPA00223">
    <property type="reaction ID" value="UER01006"/>
</dbReference>
<dbReference type="Proteomes" id="UP000008143">
    <property type="component" value="Chromosome 6"/>
</dbReference>
<dbReference type="Bgee" id="ENSXETG00000023408">
    <property type="expression patterns" value="Expressed in skeletal muscle tissue and 18 other cell types or tissues"/>
</dbReference>
<dbReference type="GO" id="GO:0005743">
    <property type="term" value="C:mitochondrial inner membrane"/>
    <property type="evidence" value="ECO:0000250"/>
    <property type="project" value="UniProtKB"/>
</dbReference>
<dbReference type="GO" id="GO:0050660">
    <property type="term" value="F:flavin adenine dinucleotide binding"/>
    <property type="evidence" value="ECO:0007669"/>
    <property type="project" value="InterPro"/>
</dbReference>
<dbReference type="GO" id="GO:0008177">
    <property type="term" value="F:succinate dehydrogenase (quinone) activity"/>
    <property type="evidence" value="ECO:0000250"/>
    <property type="project" value="UniProtKB"/>
</dbReference>
<dbReference type="GO" id="GO:0022900">
    <property type="term" value="P:electron transport chain"/>
    <property type="evidence" value="ECO:0007669"/>
    <property type="project" value="InterPro"/>
</dbReference>
<dbReference type="GO" id="GO:0006099">
    <property type="term" value="P:tricarboxylic acid cycle"/>
    <property type="evidence" value="ECO:0007669"/>
    <property type="project" value="UniProtKB-UniPathway"/>
</dbReference>
<dbReference type="FunFam" id="3.90.700.10:FF:000001">
    <property type="entry name" value="Mitochondrial succinate dehydrogenase flavoprotein subunit"/>
    <property type="match status" value="1"/>
</dbReference>
<dbReference type="FunFam" id="4.10.80.40:FF:000004">
    <property type="entry name" value="Succinate dehydrogenase [ubiquinone] flavoprotein subunit, mitochondrial"/>
    <property type="match status" value="1"/>
</dbReference>
<dbReference type="FunFam" id="3.50.50.60:FF:000482">
    <property type="entry name" value="Succinate dehydrogenase complex, subunit A, flavoprotein (Fp)"/>
    <property type="match status" value="1"/>
</dbReference>
<dbReference type="FunFam" id="3.50.50.60:FF:001062">
    <property type="entry name" value="Succinate dehydrogenase complex, subunit A, flavoprotein (Fp)"/>
    <property type="match status" value="1"/>
</dbReference>
<dbReference type="FunFam" id="1.20.58.100:FF:000001">
    <property type="entry name" value="Succinate dehydrogenase flavoprotein subunit (SdhA)"/>
    <property type="match status" value="1"/>
</dbReference>
<dbReference type="Gene3D" id="3.50.50.60">
    <property type="entry name" value="FAD/NAD(P)-binding domain"/>
    <property type="match status" value="1"/>
</dbReference>
<dbReference type="Gene3D" id="1.20.58.100">
    <property type="entry name" value="Fumarate reductase/succinate dehydrogenase flavoprotein-like, C-terminal domain"/>
    <property type="match status" value="1"/>
</dbReference>
<dbReference type="Gene3D" id="4.10.80.40">
    <property type="entry name" value="succinate dehydrogenase protein domain"/>
    <property type="match status" value="1"/>
</dbReference>
<dbReference type="Gene3D" id="3.90.700.10">
    <property type="entry name" value="Succinate dehydrogenase/fumarate reductase flavoprotein, catalytic domain"/>
    <property type="match status" value="1"/>
</dbReference>
<dbReference type="InterPro" id="IPR003953">
    <property type="entry name" value="FAD-dep_OxRdtase_2_FAD-bd"/>
</dbReference>
<dbReference type="InterPro" id="IPR036188">
    <property type="entry name" value="FAD/NAD-bd_sf"/>
</dbReference>
<dbReference type="InterPro" id="IPR003952">
    <property type="entry name" value="FRD_SDH_FAD_BS"/>
</dbReference>
<dbReference type="InterPro" id="IPR037099">
    <property type="entry name" value="Fum_R/Succ_DH_flav-like_C_sf"/>
</dbReference>
<dbReference type="InterPro" id="IPR015939">
    <property type="entry name" value="Fum_Rdtase/Succ_DH_flav-like_C"/>
</dbReference>
<dbReference type="InterPro" id="IPR030664">
    <property type="entry name" value="SdhA/FrdA/AprA"/>
</dbReference>
<dbReference type="InterPro" id="IPR027477">
    <property type="entry name" value="Succ_DH/fumarate_Rdtase_cat_sf"/>
</dbReference>
<dbReference type="InterPro" id="IPR011281">
    <property type="entry name" value="Succ_DH_flav_su_fwd"/>
</dbReference>
<dbReference type="InterPro" id="IPR014006">
    <property type="entry name" value="Succ_Dhase_FrdA_Gneg"/>
</dbReference>
<dbReference type="NCBIfam" id="TIGR01816">
    <property type="entry name" value="sdhA_forward"/>
    <property type="match status" value="1"/>
</dbReference>
<dbReference type="NCBIfam" id="TIGR01812">
    <property type="entry name" value="sdhA_frdA_Gneg"/>
    <property type="match status" value="1"/>
</dbReference>
<dbReference type="PANTHER" id="PTHR11632">
    <property type="entry name" value="SUCCINATE DEHYDROGENASE 2 FLAVOPROTEIN SUBUNIT"/>
    <property type="match status" value="1"/>
</dbReference>
<dbReference type="PANTHER" id="PTHR11632:SF51">
    <property type="entry name" value="SUCCINATE DEHYDROGENASE [UBIQUINONE] FLAVOPROTEIN SUBUNIT, MITOCHONDRIAL"/>
    <property type="match status" value="1"/>
</dbReference>
<dbReference type="Pfam" id="PF00890">
    <property type="entry name" value="FAD_binding_2"/>
    <property type="match status" value="1"/>
</dbReference>
<dbReference type="Pfam" id="PF02910">
    <property type="entry name" value="Succ_DH_flav_C"/>
    <property type="match status" value="1"/>
</dbReference>
<dbReference type="PIRSF" id="PIRSF000171">
    <property type="entry name" value="SDHA_APRA_LASPO"/>
    <property type="match status" value="1"/>
</dbReference>
<dbReference type="SUPFAM" id="SSF51905">
    <property type="entry name" value="FAD/NAD(P)-binding domain"/>
    <property type="match status" value="1"/>
</dbReference>
<dbReference type="SUPFAM" id="SSF46977">
    <property type="entry name" value="Succinate dehydrogenase/fumarate reductase flavoprotein C-terminal domain"/>
    <property type="match status" value="1"/>
</dbReference>
<dbReference type="SUPFAM" id="SSF56425">
    <property type="entry name" value="Succinate dehydrogenase/fumarate reductase flavoprotein, catalytic domain"/>
    <property type="match status" value="1"/>
</dbReference>
<dbReference type="PROSITE" id="PS00504">
    <property type="entry name" value="FRD_SDH_FAD_BINDING"/>
    <property type="match status" value="1"/>
</dbReference>
<reference key="1">
    <citation type="submission" date="2006-10" db="EMBL/GenBank/DDBJ databases">
        <authorList>
            <consortium name="Sanger Xenopus tropicalis EST/cDNA project"/>
        </authorList>
    </citation>
    <scope>NUCLEOTIDE SEQUENCE [LARGE SCALE MRNA]</scope>
    <source>
        <tissue>Neurula</tissue>
    </source>
</reference>
<reference key="2">
    <citation type="submission" date="2007-03" db="EMBL/GenBank/DDBJ databases">
        <authorList>
            <consortium name="NIH - Xenopus Gene Collection (XGC) project"/>
        </authorList>
    </citation>
    <scope>NUCLEOTIDE SEQUENCE [LARGE SCALE MRNA]</scope>
    <source>
        <tissue>Embryo</tissue>
    </source>
</reference>
<evidence type="ECO:0000250" key="1">
    <source>
        <dbReference type="UniProtKB" id="P31039"/>
    </source>
</evidence>
<evidence type="ECO:0000250" key="2">
    <source>
        <dbReference type="UniProtKB" id="P31040"/>
    </source>
</evidence>
<evidence type="ECO:0000250" key="3">
    <source>
        <dbReference type="UniProtKB" id="Q0QF01"/>
    </source>
</evidence>
<evidence type="ECO:0000250" key="4">
    <source>
        <dbReference type="UniProtKB" id="Q9YHT1"/>
    </source>
</evidence>
<evidence type="ECO:0000305" key="5"/>
<organism>
    <name type="scientific">Xenopus tropicalis</name>
    <name type="common">Western clawed frog</name>
    <name type="synonym">Silurana tropicalis</name>
    <dbReference type="NCBI Taxonomy" id="8364"/>
    <lineage>
        <taxon>Eukaryota</taxon>
        <taxon>Metazoa</taxon>
        <taxon>Chordata</taxon>
        <taxon>Craniata</taxon>
        <taxon>Vertebrata</taxon>
        <taxon>Euteleostomi</taxon>
        <taxon>Amphibia</taxon>
        <taxon>Batrachia</taxon>
        <taxon>Anura</taxon>
        <taxon>Pipoidea</taxon>
        <taxon>Pipidae</taxon>
        <taxon>Xenopodinae</taxon>
        <taxon>Xenopus</taxon>
        <taxon>Silurana</taxon>
    </lineage>
</organism>
<name>SDHA_XENTR</name>
<sequence length="665" mass="72706">MAFLNVASSRLLSKTLQLGGRVQNCTATCTAATRNFHFSVYGRKDTSAKLSDSISTQYPVVDHDFDAVVVGAGGAGLRAAFGLSEAGFNTACITKLFPTRSHTVAAQGGINAALGNMEDDDWRWHFYDTVKGSDWLGDQDAIHYMTEQAPASVIELENYGMPFSRTEQGKIYQRAFGGQSLKFGKGGQAHRCCCVADRTGHSLLHTLYGRSLRYDTSYFVEYFALDLLMENGECRGVIALCMEDGSIHRFRAKNTVIATGGYGRTFFSCTSAHTCTGDGTAMVTRAGLPCQDLEFVQFHPTGIYGAGCLITEGCRGEGGILINSEGERFMERYAPVAKDLASRDVVSRSMTIEIREGRGCGKDKDHVYLQLHHLPPSQLASRLPGISETAMIFAGVDVTKEPIPVLPTVHYNMGGIPTNYKGQVITHVNGEDRVVPGLYACGEAASASVHGANRLGANSLLDLVVFGRACALSIAESCKPGEPVPSIKENAGEESVANLDKLRFTNGSTRTSELRINMQKTMQNHAAVFRTGSVLKEGCEKLSAINSTMDDIKTFDRGIVWNTDLVETLELQNLMLCALQTIYGAEARKESRGAHAREDYKVRIDEYDYSKPIQGQQKKSFSEHWRKHTLSYVDGKGKVSLEYRPVIDTTLNEDCVSVPPAIRSY</sequence>
<accession>Q28ED0</accession>
<accession>A4QNI5</accession>